<evidence type="ECO:0000250" key="1"/>
<evidence type="ECO:0000250" key="2">
    <source>
        <dbReference type="UniProtKB" id="P04746"/>
    </source>
</evidence>
<evidence type="ECO:0000250" key="3">
    <source>
        <dbReference type="UniProtKB" id="P56634"/>
    </source>
</evidence>
<evidence type="ECO:0000255" key="4"/>
<evidence type="ECO:0000305" key="5"/>
<gene>
    <name type="primary">Amyrel</name>
</gene>
<proteinExistence type="inferred from homology"/>
<name>AMYR_DROVA</name>
<organism>
    <name type="scientific">Drosophila varians</name>
    <name type="common">Fruit fly</name>
    <dbReference type="NCBI Taxonomy" id="30050"/>
    <lineage>
        <taxon>Eukaryota</taxon>
        <taxon>Metazoa</taxon>
        <taxon>Ecdysozoa</taxon>
        <taxon>Arthropoda</taxon>
        <taxon>Hexapoda</taxon>
        <taxon>Insecta</taxon>
        <taxon>Pterygota</taxon>
        <taxon>Neoptera</taxon>
        <taxon>Endopterygota</taxon>
        <taxon>Diptera</taxon>
        <taxon>Brachycera</taxon>
        <taxon>Muscomorpha</taxon>
        <taxon>Ephydroidea</taxon>
        <taxon>Drosophilidae</taxon>
        <taxon>Drosophila</taxon>
        <taxon>Sophophora</taxon>
    </lineage>
</organism>
<dbReference type="EC" id="3.2.1.1" evidence="2"/>
<dbReference type="EMBL" id="AF136937">
    <property type="protein sequence ID" value="AAF25719.2"/>
    <property type="molecule type" value="Genomic_DNA"/>
</dbReference>
<dbReference type="SMR" id="Q9NJN7"/>
<dbReference type="CAZy" id="GH13">
    <property type="family name" value="Glycoside Hydrolase Family 13"/>
</dbReference>
<dbReference type="GO" id="GO:0005576">
    <property type="term" value="C:extracellular region"/>
    <property type="evidence" value="ECO:0007669"/>
    <property type="project" value="UniProtKB-SubCell"/>
</dbReference>
<dbReference type="GO" id="GO:0004556">
    <property type="term" value="F:alpha-amylase activity"/>
    <property type="evidence" value="ECO:0007669"/>
    <property type="project" value="UniProtKB-EC"/>
</dbReference>
<dbReference type="GO" id="GO:0046872">
    <property type="term" value="F:metal ion binding"/>
    <property type="evidence" value="ECO:0007669"/>
    <property type="project" value="UniProtKB-KW"/>
</dbReference>
<dbReference type="GO" id="GO:0005975">
    <property type="term" value="P:carbohydrate metabolic process"/>
    <property type="evidence" value="ECO:0007669"/>
    <property type="project" value="InterPro"/>
</dbReference>
<dbReference type="CDD" id="cd11317">
    <property type="entry name" value="AmyAc_bac_euk_AmyA"/>
    <property type="match status" value="1"/>
</dbReference>
<dbReference type="FunFam" id="3.20.20.80:FF:000119">
    <property type="entry name" value="Alpha-amylase-related protein"/>
    <property type="match status" value="1"/>
</dbReference>
<dbReference type="FunFam" id="2.60.40.1180:FF:000020">
    <property type="entry name" value="Pancreatic alpha-amylase"/>
    <property type="match status" value="1"/>
</dbReference>
<dbReference type="Gene3D" id="3.20.20.80">
    <property type="entry name" value="Glycosidases"/>
    <property type="match status" value="1"/>
</dbReference>
<dbReference type="Gene3D" id="2.60.40.1180">
    <property type="entry name" value="Golgi alpha-mannosidase II"/>
    <property type="match status" value="1"/>
</dbReference>
<dbReference type="InterPro" id="IPR006048">
    <property type="entry name" value="A-amylase/branching_C"/>
</dbReference>
<dbReference type="InterPro" id="IPR031319">
    <property type="entry name" value="A-amylase_C"/>
</dbReference>
<dbReference type="InterPro" id="IPR006046">
    <property type="entry name" value="Alpha_amylase"/>
</dbReference>
<dbReference type="InterPro" id="IPR006047">
    <property type="entry name" value="Glyco_hydro_13_cat_dom"/>
</dbReference>
<dbReference type="InterPro" id="IPR013780">
    <property type="entry name" value="Glyco_hydro_b"/>
</dbReference>
<dbReference type="InterPro" id="IPR017853">
    <property type="entry name" value="Glycoside_hydrolase_SF"/>
</dbReference>
<dbReference type="PANTHER" id="PTHR43447">
    <property type="entry name" value="ALPHA-AMYLASE"/>
    <property type="match status" value="1"/>
</dbReference>
<dbReference type="Pfam" id="PF00128">
    <property type="entry name" value="Alpha-amylase"/>
    <property type="match status" value="1"/>
</dbReference>
<dbReference type="Pfam" id="PF02806">
    <property type="entry name" value="Alpha-amylase_C"/>
    <property type="match status" value="1"/>
</dbReference>
<dbReference type="PRINTS" id="PR00110">
    <property type="entry name" value="ALPHAAMYLASE"/>
</dbReference>
<dbReference type="SMART" id="SM00642">
    <property type="entry name" value="Aamy"/>
    <property type="match status" value="1"/>
</dbReference>
<dbReference type="SMART" id="SM00632">
    <property type="entry name" value="Aamy_C"/>
    <property type="match status" value="1"/>
</dbReference>
<dbReference type="SUPFAM" id="SSF51445">
    <property type="entry name" value="(Trans)glycosidases"/>
    <property type="match status" value="1"/>
</dbReference>
<dbReference type="SUPFAM" id="SSF51011">
    <property type="entry name" value="Glycosyl hydrolase domain"/>
    <property type="match status" value="1"/>
</dbReference>
<reference key="1">
    <citation type="submission" date="2000-01" db="EMBL/GenBank/DDBJ databases">
        <title>Origin and evolution of the Amyrel gene in Drosophila.</title>
        <authorList>
            <person name="Da Lage J.-L."/>
            <person name="Renard E."/>
            <person name="Chartois F."/>
            <person name="Cariou M.-L."/>
        </authorList>
    </citation>
    <scope>NUCLEOTIDE SEQUENCE [GENOMIC DNA]</scope>
</reference>
<accession>Q9NJN7</accession>
<feature type="signal peptide" evidence="1">
    <location>
        <begin position="1"/>
        <end position="20"/>
    </location>
</feature>
<feature type="chain" id="PRO_0000001392" description="Alpha-amylase-related protein">
    <location>
        <begin position="21"/>
        <end position="494"/>
    </location>
</feature>
<feature type="active site" description="Nucleophile" evidence="2">
    <location>
        <position position="208"/>
    </location>
</feature>
<feature type="active site" description="Proton donor" evidence="2">
    <location>
        <position position="245"/>
    </location>
</feature>
<feature type="binding site" evidence="3">
    <location>
        <position position="118"/>
    </location>
    <ligand>
        <name>Ca(2+)</name>
        <dbReference type="ChEBI" id="CHEBI:29108"/>
    </ligand>
</feature>
<feature type="binding site" evidence="3">
    <location>
        <position position="169"/>
    </location>
    <ligand>
        <name>Ca(2+)</name>
        <dbReference type="ChEBI" id="CHEBI:29108"/>
    </ligand>
</feature>
<feature type="binding site" evidence="3">
    <location>
        <position position="178"/>
    </location>
    <ligand>
        <name>Ca(2+)</name>
        <dbReference type="ChEBI" id="CHEBI:29108"/>
    </ligand>
</feature>
<feature type="binding site" evidence="3">
    <location>
        <position position="206"/>
    </location>
    <ligand>
        <name>chloride</name>
        <dbReference type="ChEBI" id="CHEBI:17996"/>
    </ligand>
</feature>
<feature type="binding site" evidence="3">
    <location>
        <position position="212"/>
    </location>
    <ligand>
        <name>Ca(2+)</name>
        <dbReference type="ChEBI" id="CHEBI:29108"/>
    </ligand>
</feature>
<feature type="binding site" evidence="3">
    <location>
        <position position="308"/>
    </location>
    <ligand>
        <name>chloride</name>
        <dbReference type="ChEBI" id="CHEBI:17996"/>
    </ligand>
</feature>
<feature type="binding site" evidence="3">
    <location>
        <position position="343"/>
    </location>
    <ligand>
        <name>chloride</name>
        <dbReference type="ChEBI" id="CHEBI:17996"/>
    </ligand>
</feature>
<feature type="site" description="Transition state stabilizer" evidence="2">
    <location>
        <position position="310"/>
    </location>
</feature>
<feature type="modified residue" description="Pyrrolidone carboxylic acid" evidence="1">
    <location>
        <position position="21"/>
    </location>
</feature>
<feature type="disulfide bond" evidence="3">
    <location>
        <begin position="48"/>
        <end position="104"/>
    </location>
</feature>
<feature type="disulfide bond" evidence="3">
    <location>
        <begin position="157"/>
        <end position="171"/>
    </location>
</feature>
<feature type="disulfide bond" evidence="3">
    <location>
        <begin position="376"/>
        <end position="382"/>
    </location>
</feature>
<feature type="disulfide bond" evidence="4">
    <location>
        <begin position="418"/>
        <end position="441"/>
    </location>
</feature>
<feature type="disulfide bond" evidence="3">
    <location>
        <begin position="448"/>
        <end position="460"/>
    </location>
</feature>
<keyword id="KW-0106">Calcium</keyword>
<keyword id="KW-0119">Carbohydrate metabolism</keyword>
<keyword id="KW-0868">Chloride</keyword>
<keyword id="KW-1015">Disulfide bond</keyword>
<keyword id="KW-0326">Glycosidase</keyword>
<keyword id="KW-0378">Hydrolase</keyword>
<keyword id="KW-0479">Metal-binding</keyword>
<keyword id="KW-0873">Pyrrolidone carboxylic acid</keyword>
<keyword id="KW-0964">Secreted</keyword>
<keyword id="KW-0732">Signal</keyword>
<protein>
    <recommendedName>
        <fullName>Alpha-amylase-related protein</fullName>
        <ecNumber evidence="2">3.2.1.1</ecNumber>
    </recommendedName>
</protein>
<comment type="catalytic activity">
    <reaction evidence="2">
        <text>Endohydrolysis of (1-&gt;4)-alpha-D-glucosidic linkages in polysaccharides containing three or more (1-&gt;4)-alpha-linked D-glucose units.</text>
        <dbReference type="EC" id="3.2.1.1"/>
    </reaction>
</comment>
<comment type="cofactor">
    <cofactor evidence="3">
        <name>Ca(2+)</name>
        <dbReference type="ChEBI" id="CHEBI:29108"/>
    </cofactor>
    <text evidence="3">Binds 1 Ca(2+) ion per subunit.</text>
</comment>
<comment type="cofactor">
    <cofactor evidence="3">
        <name>chloride</name>
        <dbReference type="ChEBI" id="CHEBI:17996"/>
    </cofactor>
    <text evidence="3">Binds 1 Cl(-) ion per subunit.</text>
</comment>
<comment type="subunit">
    <text evidence="1">Monomer.</text>
</comment>
<comment type="subcellular location">
    <subcellularLocation>
        <location evidence="5">Secreted</location>
    </subcellularLocation>
</comment>
<comment type="similarity">
    <text evidence="5">Belongs to the glycosyl hydrolase 13 family.</text>
</comment>
<sequence length="494" mass="55213">MFKFASAVILCVVAASSTLAQHNPHWWGNRNTIVHLFEWKWDDIAAECENFLGPHGFAGVQVSPVNENIISSGRPWWERYQPISYKLTTRSGDEQDFGDMVRRCNDVGVRIYVDVLLNHMSGDFDGVAVGTAGTEAEPSKKSFPGVPYSAQDFHPSCEITDWNDRFQVQQCELVGLKDLDQSSDWVRSKLIEFLDHLIELGVAGFRVDAAKHMAADDLSYIYSSLSDLSTEHGFPHNARPFIFQEVIDHGHETVSREEYNTLGAVTEFRFSEEIGNAFRGNNALKWLQSWGTGWGFLPSGQALTFVDNHDNQRDMGAVLNYKSPKQYKMATAFHLAYPYGISRVMSSFAFDDHDTAPPQDAQERIISPEFDAEGACVNGWICEHRWRQIYAMVGFKNAVRDTELSNWWDNGDSQISFCRGNKGFLAVNNNLYDLSQDLQTCLPAGVYCDVISGSLVDGSCTGKSVTVDSNGYGYVHIGSDDFDGVLALHVDAKV</sequence>